<feature type="chain" id="PRO_0000189866" description="Phosphate acyltransferase">
    <location>
        <begin position="1"/>
        <end position="321"/>
    </location>
</feature>
<accession>O84817</accession>
<reference key="1">
    <citation type="journal article" date="1998" name="Science">
        <title>Genome sequence of an obligate intracellular pathogen of humans: Chlamydia trachomatis.</title>
        <authorList>
            <person name="Stephens R.S."/>
            <person name="Kalman S."/>
            <person name="Lammel C.J."/>
            <person name="Fan J."/>
            <person name="Marathe R."/>
            <person name="Aravind L."/>
            <person name="Mitchell W.P."/>
            <person name="Olinger L."/>
            <person name="Tatusov R.L."/>
            <person name="Zhao Q."/>
            <person name="Koonin E.V."/>
            <person name="Davis R.W."/>
        </authorList>
    </citation>
    <scope>NUCLEOTIDE SEQUENCE [LARGE SCALE GENOMIC DNA]</scope>
    <source>
        <strain>ATCC VR-885 / DSM 19411 / UW-3/Cx</strain>
    </source>
</reference>
<sequence>MKVRLGVDMMGGDHDPLVVWEALGEVLLSSTGEQPVEFTVFATSDVHHQLMNSPLSRSVRIVTAEDFVSMEDSLLAAVRKKRSSMALGLDALQQGDLDGFVSSGNTAALVTLARSKIPMIPAVPRPALLVSVPTLSGFAVILDVGATVSVNPDEMVGFARMGLAYRQSLSSNSNQPFTLGLLNIGSEERKGTDSHKQTFRMLRNIFGSAFLGNIESGDVFSGKVDIVVTDGFTGNVFLKTAEGLFDFLRHILGDRLEKSIKMQFDYTIYPGSIISGLSRLVIKCHGKSHGTALFGGISGAIDLARANVCSRIADRFGDNVV</sequence>
<name>PLSX_CHLTR</name>
<proteinExistence type="inferred from homology"/>
<gene>
    <name evidence="1" type="primary">plsX</name>
    <name type="ordered locus">CT_811</name>
</gene>
<organism>
    <name type="scientific">Chlamydia trachomatis serovar D (strain ATCC VR-885 / DSM 19411 / UW-3/Cx)</name>
    <dbReference type="NCBI Taxonomy" id="272561"/>
    <lineage>
        <taxon>Bacteria</taxon>
        <taxon>Pseudomonadati</taxon>
        <taxon>Chlamydiota</taxon>
        <taxon>Chlamydiia</taxon>
        <taxon>Chlamydiales</taxon>
        <taxon>Chlamydiaceae</taxon>
        <taxon>Chlamydia/Chlamydophila group</taxon>
        <taxon>Chlamydia</taxon>
    </lineage>
</organism>
<protein>
    <recommendedName>
        <fullName evidence="1">Phosphate acyltransferase</fullName>
        <ecNumber evidence="1">2.3.1.274</ecNumber>
    </recommendedName>
    <alternativeName>
        <fullName evidence="1">Acyl-ACP phosphotransacylase</fullName>
    </alternativeName>
    <alternativeName>
        <fullName evidence="1">Acyl-[acyl-carrier-protein]--phosphate acyltransferase</fullName>
    </alternativeName>
    <alternativeName>
        <fullName evidence="1">Phosphate-acyl-ACP acyltransferase</fullName>
    </alternativeName>
</protein>
<evidence type="ECO:0000255" key="1">
    <source>
        <dbReference type="HAMAP-Rule" id="MF_00019"/>
    </source>
</evidence>
<comment type="function">
    <text evidence="1">Catalyzes the reversible formation of acyl-phosphate (acyl-PO(4)) from acyl-[acyl-carrier-protein] (acyl-ACP). This enzyme utilizes acyl-ACP as fatty acyl donor, but not acyl-CoA.</text>
</comment>
<comment type="catalytic activity">
    <reaction evidence="1">
        <text>a fatty acyl-[ACP] + phosphate = an acyl phosphate + holo-[ACP]</text>
        <dbReference type="Rhea" id="RHEA:42292"/>
        <dbReference type="Rhea" id="RHEA-COMP:9685"/>
        <dbReference type="Rhea" id="RHEA-COMP:14125"/>
        <dbReference type="ChEBI" id="CHEBI:43474"/>
        <dbReference type="ChEBI" id="CHEBI:59918"/>
        <dbReference type="ChEBI" id="CHEBI:64479"/>
        <dbReference type="ChEBI" id="CHEBI:138651"/>
        <dbReference type="EC" id="2.3.1.274"/>
    </reaction>
</comment>
<comment type="pathway">
    <text evidence="1">Lipid metabolism; phospholipid metabolism.</text>
</comment>
<comment type="subunit">
    <text evidence="1">Homodimer. Probably interacts with PlsY.</text>
</comment>
<comment type="subcellular location">
    <subcellularLocation>
        <location evidence="1">Cytoplasm</location>
    </subcellularLocation>
    <text evidence="1">Associated with the membrane possibly through PlsY.</text>
</comment>
<comment type="similarity">
    <text evidence="1">Belongs to the PlsX family.</text>
</comment>
<keyword id="KW-0963">Cytoplasm</keyword>
<keyword id="KW-0444">Lipid biosynthesis</keyword>
<keyword id="KW-0443">Lipid metabolism</keyword>
<keyword id="KW-0594">Phospholipid biosynthesis</keyword>
<keyword id="KW-1208">Phospholipid metabolism</keyword>
<keyword id="KW-1185">Reference proteome</keyword>
<keyword id="KW-0808">Transferase</keyword>
<dbReference type="EC" id="2.3.1.274" evidence="1"/>
<dbReference type="EMBL" id="AE001273">
    <property type="protein sequence ID" value="AAC68407.1"/>
    <property type="molecule type" value="Genomic_DNA"/>
</dbReference>
<dbReference type="PIR" id="G71468">
    <property type="entry name" value="G71468"/>
</dbReference>
<dbReference type="RefSeq" id="NP_220331.1">
    <property type="nucleotide sequence ID" value="NC_000117.1"/>
</dbReference>
<dbReference type="RefSeq" id="WP_009872947.1">
    <property type="nucleotide sequence ID" value="NC_000117.1"/>
</dbReference>
<dbReference type="SMR" id="O84817"/>
<dbReference type="FunCoup" id="O84817">
    <property type="interactions" value="164"/>
</dbReference>
<dbReference type="STRING" id="272561.CT_811"/>
<dbReference type="EnsemblBacteria" id="AAC68407">
    <property type="protein sequence ID" value="AAC68407"/>
    <property type="gene ID" value="CT_811"/>
</dbReference>
<dbReference type="GeneID" id="884610"/>
<dbReference type="KEGG" id="ctr:CT_811"/>
<dbReference type="PATRIC" id="fig|272561.5.peg.894"/>
<dbReference type="HOGENOM" id="CLU_039379_1_1_0"/>
<dbReference type="InParanoid" id="O84817"/>
<dbReference type="OrthoDB" id="9806408at2"/>
<dbReference type="UniPathway" id="UPA00085"/>
<dbReference type="Proteomes" id="UP000000431">
    <property type="component" value="Chromosome"/>
</dbReference>
<dbReference type="GO" id="GO:0005737">
    <property type="term" value="C:cytoplasm"/>
    <property type="evidence" value="ECO:0007669"/>
    <property type="project" value="UniProtKB-SubCell"/>
</dbReference>
<dbReference type="GO" id="GO:0043811">
    <property type="term" value="F:phosphate:acyl-[acyl carrier protein] acyltransferase activity"/>
    <property type="evidence" value="ECO:0007669"/>
    <property type="project" value="UniProtKB-UniRule"/>
</dbReference>
<dbReference type="GO" id="GO:0006633">
    <property type="term" value="P:fatty acid biosynthetic process"/>
    <property type="evidence" value="ECO:0007669"/>
    <property type="project" value="UniProtKB-UniRule"/>
</dbReference>
<dbReference type="GO" id="GO:0008654">
    <property type="term" value="P:phospholipid biosynthetic process"/>
    <property type="evidence" value="ECO:0007669"/>
    <property type="project" value="UniProtKB-KW"/>
</dbReference>
<dbReference type="Gene3D" id="3.40.718.10">
    <property type="entry name" value="Isopropylmalate Dehydrogenase"/>
    <property type="match status" value="1"/>
</dbReference>
<dbReference type="HAMAP" id="MF_00019">
    <property type="entry name" value="PlsX"/>
    <property type="match status" value="1"/>
</dbReference>
<dbReference type="InterPro" id="IPR003664">
    <property type="entry name" value="FA_synthesis"/>
</dbReference>
<dbReference type="InterPro" id="IPR012281">
    <property type="entry name" value="Phospholipid_synth_PlsX-like"/>
</dbReference>
<dbReference type="NCBIfam" id="NF010420">
    <property type="entry name" value="PRK13846.1"/>
    <property type="match status" value="1"/>
</dbReference>
<dbReference type="PANTHER" id="PTHR30100">
    <property type="entry name" value="FATTY ACID/PHOSPHOLIPID SYNTHESIS PROTEIN PLSX"/>
    <property type="match status" value="1"/>
</dbReference>
<dbReference type="PANTHER" id="PTHR30100:SF1">
    <property type="entry name" value="PHOSPHATE ACYLTRANSFERASE"/>
    <property type="match status" value="1"/>
</dbReference>
<dbReference type="Pfam" id="PF02504">
    <property type="entry name" value="FA_synthesis"/>
    <property type="match status" value="1"/>
</dbReference>
<dbReference type="PIRSF" id="PIRSF002465">
    <property type="entry name" value="Phsphlp_syn_PlsX"/>
    <property type="match status" value="1"/>
</dbReference>
<dbReference type="SUPFAM" id="SSF53659">
    <property type="entry name" value="Isocitrate/Isopropylmalate dehydrogenase-like"/>
    <property type="match status" value="1"/>
</dbReference>